<feature type="chain" id="PRO_1000002830" description="Crossover junction endodeoxyribonuclease RuvC">
    <location>
        <begin position="1"/>
        <end position="173"/>
    </location>
</feature>
<feature type="active site" evidence="1">
    <location>
        <position position="8"/>
    </location>
</feature>
<feature type="active site" evidence="1">
    <location>
        <position position="67"/>
    </location>
</feature>
<feature type="active site" evidence="1">
    <location>
        <position position="139"/>
    </location>
</feature>
<feature type="binding site" evidence="1">
    <location>
        <position position="8"/>
    </location>
    <ligand>
        <name>Mg(2+)</name>
        <dbReference type="ChEBI" id="CHEBI:18420"/>
        <label>1</label>
    </ligand>
</feature>
<feature type="binding site" evidence="1">
    <location>
        <position position="67"/>
    </location>
    <ligand>
        <name>Mg(2+)</name>
        <dbReference type="ChEBI" id="CHEBI:18420"/>
        <label>2</label>
    </ligand>
</feature>
<feature type="binding site" evidence="1">
    <location>
        <position position="139"/>
    </location>
    <ligand>
        <name>Mg(2+)</name>
        <dbReference type="ChEBI" id="CHEBI:18420"/>
        <label>1</label>
    </ligand>
</feature>
<organism>
    <name type="scientific">Shewanella loihica (strain ATCC BAA-1088 / PV-4)</name>
    <dbReference type="NCBI Taxonomy" id="323850"/>
    <lineage>
        <taxon>Bacteria</taxon>
        <taxon>Pseudomonadati</taxon>
        <taxon>Pseudomonadota</taxon>
        <taxon>Gammaproteobacteria</taxon>
        <taxon>Alteromonadales</taxon>
        <taxon>Shewanellaceae</taxon>
        <taxon>Shewanella</taxon>
    </lineage>
</organism>
<evidence type="ECO:0000255" key="1">
    <source>
        <dbReference type="HAMAP-Rule" id="MF_00034"/>
    </source>
</evidence>
<reference key="1">
    <citation type="submission" date="2007-03" db="EMBL/GenBank/DDBJ databases">
        <title>Complete sequence of Shewanella loihica PV-4.</title>
        <authorList>
            <consortium name="US DOE Joint Genome Institute"/>
            <person name="Copeland A."/>
            <person name="Lucas S."/>
            <person name="Lapidus A."/>
            <person name="Barry K."/>
            <person name="Detter J.C."/>
            <person name="Glavina del Rio T."/>
            <person name="Hammon N."/>
            <person name="Israni S."/>
            <person name="Dalin E."/>
            <person name="Tice H."/>
            <person name="Pitluck S."/>
            <person name="Chain P."/>
            <person name="Malfatti S."/>
            <person name="Shin M."/>
            <person name="Vergez L."/>
            <person name="Schmutz J."/>
            <person name="Larimer F."/>
            <person name="Land M."/>
            <person name="Hauser L."/>
            <person name="Kyrpides N."/>
            <person name="Mikhailova N."/>
            <person name="Romine M.F."/>
            <person name="Serres G."/>
            <person name="Fredrickson J."/>
            <person name="Tiedje J."/>
            <person name="Richardson P."/>
        </authorList>
    </citation>
    <scope>NUCLEOTIDE SEQUENCE [LARGE SCALE GENOMIC DNA]</scope>
    <source>
        <strain>ATCC BAA-1088 / PV-4</strain>
    </source>
</reference>
<proteinExistence type="inferred from homology"/>
<sequence>MPIILGVDPGSRITGYGVIQCQGRQQIYLGSGCIRTQSDDLPSRLKVIFDGISEIIRQYQPDEFAIERVFLAKNADSALKLGQARGAAIVAATNAQLPVAEYSATQIKNAVVGTGRAQKSQVQHMVQQILKLPAAPQADAADALGVALCHFHTYQSLIAMGGKASVRTYGRYR</sequence>
<name>RUVC_SHELP</name>
<protein>
    <recommendedName>
        <fullName evidence="1">Crossover junction endodeoxyribonuclease RuvC</fullName>
        <ecNumber evidence="1">3.1.21.10</ecNumber>
    </recommendedName>
    <alternativeName>
        <fullName evidence="1">Holliday junction nuclease RuvC</fullName>
    </alternativeName>
    <alternativeName>
        <fullName evidence="1">Holliday junction resolvase RuvC</fullName>
    </alternativeName>
</protein>
<comment type="function">
    <text evidence="1">The RuvA-RuvB-RuvC complex processes Holliday junction (HJ) DNA during genetic recombination and DNA repair. Endonuclease that resolves HJ intermediates. Cleaves cruciform DNA by making single-stranded nicks across the HJ at symmetrical positions within the homologous arms, yielding a 5'-phosphate and a 3'-hydroxyl group; requires a central core of homology in the junction. The consensus cleavage sequence is 5'-(A/T)TT(C/G)-3'. Cleavage occurs on the 3'-side of the TT dinucleotide at the point of strand exchange. HJ branch migration catalyzed by RuvA-RuvB allows RuvC to scan DNA until it finds its consensus sequence, where it cleaves and resolves the cruciform DNA.</text>
</comment>
<comment type="catalytic activity">
    <reaction evidence="1">
        <text>Endonucleolytic cleavage at a junction such as a reciprocal single-stranded crossover between two homologous DNA duplexes (Holliday junction).</text>
        <dbReference type="EC" id="3.1.21.10"/>
    </reaction>
</comment>
<comment type="cofactor">
    <cofactor evidence="1">
        <name>Mg(2+)</name>
        <dbReference type="ChEBI" id="CHEBI:18420"/>
    </cofactor>
    <text evidence="1">Binds 2 Mg(2+) ion per subunit.</text>
</comment>
<comment type="subunit">
    <text evidence="1">Homodimer which binds Holliday junction (HJ) DNA. The HJ becomes 2-fold symmetrical on binding to RuvC with unstacked arms; it has a different conformation from HJ DNA in complex with RuvA. In the full resolvosome a probable DNA-RuvA(4)-RuvB(12)-RuvC(2) complex forms which resolves the HJ.</text>
</comment>
<comment type="subcellular location">
    <subcellularLocation>
        <location evidence="1">Cytoplasm</location>
    </subcellularLocation>
</comment>
<comment type="similarity">
    <text evidence="1">Belongs to the RuvC family.</text>
</comment>
<accession>A3QEP5</accession>
<keyword id="KW-0963">Cytoplasm</keyword>
<keyword id="KW-0227">DNA damage</keyword>
<keyword id="KW-0233">DNA recombination</keyword>
<keyword id="KW-0234">DNA repair</keyword>
<keyword id="KW-0238">DNA-binding</keyword>
<keyword id="KW-0255">Endonuclease</keyword>
<keyword id="KW-0378">Hydrolase</keyword>
<keyword id="KW-0460">Magnesium</keyword>
<keyword id="KW-0479">Metal-binding</keyword>
<keyword id="KW-0540">Nuclease</keyword>
<keyword id="KW-1185">Reference proteome</keyword>
<gene>
    <name evidence="1" type="primary">ruvC</name>
    <name type="ordered locus">Shew_2077</name>
</gene>
<dbReference type="EC" id="3.1.21.10" evidence="1"/>
<dbReference type="EMBL" id="CP000606">
    <property type="protein sequence ID" value="ABO23943.1"/>
    <property type="molecule type" value="Genomic_DNA"/>
</dbReference>
<dbReference type="RefSeq" id="WP_011865875.1">
    <property type="nucleotide sequence ID" value="NC_009092.1"/>
</dbReference>
<dbReference type="SMR" id="A3QEP5"/>
<dbReference type="STRING" id="323850.Shew_2077"/>
<dbReference type="KEGG" id="slo:Shew_2077"/>
<dbReference type="eggNOG" id="COG0817">
    <property type="taxonomic scope" value="Bacteria"/>
</dbReference>
<dbReference type="HOGENOM" id="CLU_091257_2_1_6"/>
<dbReference type="OrthoDB" id="9805499at2"/>
<dbReference type="Proteomes" id="UP000001558">
    <property type="component" value="Chromosome"/>
</dbReference>
<dbReference type="GO" id="GO:0005737">
    <property type="term" value="C:cytoplasm"/>
    <property type="evidence" value="ECO:0007669"/>
    <property type="project" value="UniProtKB-SubCell"/>
</dbReference>
<dbReference type="GO" id="GO:0048476">
    <property type="term" value="C:Holliday junction resolvase complex"/>
    <property type="evidence" value="ECO:0007669"/>
    <property type="project" value="UniProtKB-UniRule"/>
</dbReference>
<dbReference type="GO" id="GO:0008821">
    <property type="term" value="F:crossover junction DNA endonuclease activity"/>
    <property type="evidence" value="ECO:0007669"/>
    <property type="project" value="UniProtKB-UniRule"/>
</dbReference>
<dbReference type="GO" id="GO:0003677">
    <property type="term" value="F:DNA binding"/>
    <property type="evidence" value="ECO:0007669"/>
    <property type="project" value="UniProtKB-KW"/>
</dbReference>
<dbReference type="GO" id="GO:0000287">
    <property type="term" value="F:magnesium ion binding"/>
    <property type="evidence" value="ECO:0007669"/>
    <property type="project" value="UniProtKB-UniRule"/>
</dbReference>
<dbReference type="GO" id="GO:0006310">
    <property type="term" value="P:DNA recombination"/>
    <property type="evidence" value="ECO:0007669"/>
    <property type="project" value="UniProtKB-UniRule"/>
</dbReference>
<dbReference type="GO" id="GO:0006281">
    <property type="term" value="P:DNA repair"/>
    <property type="evidence" value="ECO:0007669"/>
    <property type="project" value="UniProtKB-UniRule"/>
</dbReference>
<dbReference type="CDD" id="cd16962">
    <property type="entry name" value="RuvC"/>
    <property type="match status" value="1"/>
</dbReference>
<dbReference type="FunFam" id="3.30.420.10:FF:000002">
    <property type="entry name" value="Crossover junction endodeoxyribonuclease RuvC"/>
    <property type="match status" value="1"/>
</dbReference>
<dbReference type="Gene3D" id="3.30.420.10">
    <property type="entry name" value="Ribonuclease H-like superfamily/Ribonuclease H"/>
    <property type="match status" value="1"/>
</dbReference>
<dbReference type="HAMAP" id="MF_00034">
    <property type="entry name" value="RuvC"/>
    <property type="match status" value="1"/>
</dbReference>
<dbReference type="InterPro" id="IPR012337">
    <property type="entry name" value="RNaseH-like_sf"/>
</dbReference>
<dbReference type="InterPro" id="IPR036397">
    <property type="entry name" value="RNaseH_sf"/>
</dbReference>
<dbReference type="InterPro" id="IPR020563">
    <property type="entry name" value="X-over_junc_endoDNase_Mg_BS"/>
</dbReference>
<dbReference type="InterPro" id="IPR002176">
    <property type="entry name" value="X-over_junc_endoDNase_RuvC"/>
</dbReference>
<dbReference type="NCBIfam" id="NF000711">
    <property type="entry name" value="PRK00039.2-1"/>
    <property type="match status" value="1"/>
</dbReference>
<dbReference type="NCBIfam" id="TIGR00228">
    <property type="entry name" value="ruvC"/>
    <property type="match status" value="1"/>
</dbReference>
<dbReference type="PANTHER" id="PTHR30194">
    <property type="entry name" value="CROSSOVER JUNCTION ENDODEOXYRIBONUCLEASE RUVC"/>
    <property type="match status" value="1"/>
</dbReference>
<dbReference type="PANTHER" id="PTHR30194:SF3">
    <property type="entry name" value="CROSSOVER JUNCTION ENDODEOXYRIBONUCLEASE RUVC"/>
    <property type="match status" value="1"/>
</dbReference>
<dbReference type="Pfam" id="PF02075">
    <property type="entry name" value="RuvC"/>
    <property type="match status" value="1"/>
</dbReference>
<dbReference type="PRINTS" id="PR00696">
    <property type="entry name" value="RSOLVASERUVC"/>
</dbReference>
<dbReference type="SUPFAM" id="SSF53098">
    <property type="entry name" value="Ribonuclease H-like"/>
    <property type="match status" value="1"/>
</dbReference>
<dbReference type="PROSITE" id="PS01321">
    <property type="entry name" value="RUVC"/>
    <property type="match status" value="1"/>
</dbReference>